<gene>
    <name type="primary">Gatm</name>
    <name type="synonym">Agat</name>
</gene>
<dbReference type="EC" id="2.1.4.1" evidence="8"/>
<dbReference type="EMBL" id="U07971">
    <property type="protein sequence ID" value="AAA21250.1"/>
    <property type="molecule type" value="mRNA"/>
</dbReference>
<dbReference type="EMBL" id="BC081785">
    <property type="protein sequence ID" value="AAH81785.1"/>
    <property type="molecule type" value="mRNA"/>
</dbReference>
<dbReference type="EMBL" id="AY625271">
    <property type="protein sequence ID" value="AAT39897.1"/>
    <property type="molecule type" value="mRNA"/>
</dbReference>
<dbReference type="PIR" id="A54140">
    <property type="entry name" value="A54140"/>
</dbReference>
<dbReference type="RefSeq" id="NP_112293.1">
    <property type="nucleotide sequence ID" value="NM_031031.3"/>
</dbReference>
<dbReference type="SMR" id="P50442"/>
<dbReference type="FunCoup" id="P50442">
    <property type="interactions" value="576"/>
</dbReference>
<dbReference type="STRING" id="10116.ENSRNOP00000000181"/>
<dbReference type="BindingDB" id="P50442"/>
<dbReference type="iPTMnet" id="P50442"/>
<dbReference type="PhosphoSitePlus" id="P50442"/>
<dbReference type="PaxDb" id="10116-ENSRNOP00000000181"/>
<dbReference type="GeneID" id="81660"/>
<dbReference type="KEGG" id="rno:81660"/>
<dbReference type="UCSC" id="RGD:71090">
    <property type="organism name" value="rat"/>
</dbReference>
<dbReference type="AGR" id="RGD:71090"/>
<dbReference type="CTD" id="2628"/>
<dbReference type="RGD" id="71090">
    <property type="gene designation" value="Gatm"/>
</dbReference>
<dbReference type="eggNOG" id="ENOG502QVCA">
    <property type="taxonomic scope" value="Eukaryota"/>
</dbReference>
<dbReference type="HOGENOM" id="CLU_047415_1_0_1"/>
<dbReference type="InParanoid" id="P50442"/>
<dbReference type="OrthoDB" id="3630at9989"/>
<dbReference type="PhylomeDB" id="P50442"/>
<dbReference type="BioCyc" id="MetaCyc:MONOMER-7583"/>
<dbReference type="BRENDA" id="2.1.4.1">
    <property type="organism ID" value="5301"/>
</dbReference>
<dbReference type="Reactome" id="R-RNO-71288">
    <property type="pathway name" value="Creatine metabolism"/>
</dbReference>
<dbReference type="UniPathway" id="UPA00104">
    <property type="reaction ID" value="UER00579"/>
</dbReference>
<dbReference type="PRO" id="PR:P50442"/>
<dbReference type="Proteomes" id="UP000002494">
    <property type="component" value="Unplaced"/>
</dbReference>
<dbReference type="GO" id="GO:0005829">
    <property type="term" value="C:cytosol"/>
    <property type="evidence" value="ECO:0000314"/>
    <property type="project" value="RGD"/>
</dbReference>
<dbReference type="GO" id="GO:0005743">
    <property type="term" value="C:mitochondrial inner membrane"/>
    <property type="evidence" value="ECO:0000314"/>
    <property type="project" value="RGD"/>
</dbReference>
<dbReference type="GO" id="GO:0005758">
    <property type="term" value="C:mitochondrial intermembrane space"/>
    <property type="evidence" value="ECO:0000266"/>
    <property type="project" value="RGD"/>
</dbReference>
<dbReference type="GO" id="GO:0005739">
    <property type="term" value="C:mitochondrion"/>
    <property type="evidence" value="ECO:0000314"/>
    <property type="project" value="RGD"/>
</dbReference>
<dbReference type="GO" id="GO:0015067">
    <property type="term" value="F:amidinotransferase activity"/>
    <property type="evidence" value="ECO:0000314"/>
    <property type="project" value="RGD"/>
</dbReference>
<dbReference type="GO" id="GO:0015068">
    <property type="term" value="F:glycine amidinotransferase activity"/>
    <property type="evidence" value="ECO:0000314"/>
    <property type="project" value="RGD"/>
</dbReference>
<dbReference type="GO" id="GO:0006601">
    <property type="term" value="P:creatine biosynthetic process"/>
    <property type="evidence" value="ECO:0000266"/>
    <property type="project" value="RGD"/>
</dbReference>
<dbReference type="GO" id="GO:0006600">
    <property type="term" value="P:creatine metabolic process"/>
    <property type="evidence" value="ECO:0000266"/>
    <property type="project" value="RGD"/>
</dbReference>
<dbReference type="GO" id="GO:1990402">
    <property type="term" value="P:embryonic liver development"/>
    <property type="evidence" value="ECO:0000270"/>
    <property type="project" value="RGD"/>
</dbReference>
<dbReference type="GO" id="GO:0001822">
    <property type="term" value="P:kidney development"/>
    <property type="evidence" value="ECO:0000314"/>
    <property type="project" value="RGD"/>
</dbReference>
<dbReference type="GO" id="GO:0007611">
    <property type="term" value="P:learning or memory"/>
    <property type="evidence" value="ECO:0000266"/>
    <property type="project" value="RGD"/>
</dbReference>
<dbReference type="GO" id="GO:0014889">
    <property type="term" value="P:muscle atrophy"/>
    <property type="evidence" value="ECO:0000266"/>
    <property type="project" value="RGD"/>
</dbReference>
<dbReference type="GO" id="GO:0120162">
    <property type="term" value="P:positive regulation of cold-induced thermogenesis"/>
    <property type="evidence" value="ECO:0000250"/>
    <property type="project" value="YuBioLab"/>
</dbReference>
<dbReference type="GO" id="GO:1905395">
    <property type="term" value="P:response to flavonoid"/>
    <property type="evidence" value="ECO:0000314"/>
    <property type="project" value="RGD"/>
</dbReference>
<dbReference type="GO" id="GO:0046689">
    <property type="term" value="P:response to mercury ion"/>
    <property type="evidence" value="ECO:0000314"/>
    <property type="project" value="RGD"/>
</dbReference>
<dbReference type="GO" id="GO:0007584">
    <property type="term" value="P:response to nutrient"/>
    <property type="evidence" value="ECO:0000314"/>
    <property type="project" value="RGD"/>
</dbReference>
<dbReference type="GO" id="GO:0006979">
    <property type="term" value="P:response to oxidative stress"/>
    <property type="evidence" value="ECO:0000270"/>
    <property type="project" value="RGD"/>
</dbReference>
<dbReference type="GO" id="GO:0043434">
    <property type="term" value="P:response to peptide hormone"/>
    <property type="evidence" value="ECO:0000314"/>
    <property type="project" value="RGD"/>
</dbReference>
<dbReference type="GO" id="GO:0042246">
    <property type="term" value="P:tissue regeneration"/>
    <property type="evidence" value="ECO:0000270"/>
    <property type="project" value="RGD"/>
</dbReference>
<dbReference type="CDD" id="cd21136">
    <property type="entry name" value="amidinotransferase_AGAT-like"/>
    <property type="match status" value="1"/>
</dbReference>
<dbReference type="FunFam" id="3.75.10.10:FF:000005">
    <property type="entry name" value="Glycine amidinotransferase, mitochondrial"/>
    <property type="match status" value="1"/>
</dbReference>
<dbReference type="Gene3D" id="3.75.10.10">
    <property type="entry name" value="L-arginine/glycine Amidinotransferase, Chain A"/>
    <property type="match status" value="1"/>
</dbReference>
<dbReference type="InterPro" id="IPR033195">
    <property type="entry name" value="AmidinoTrfase"/>
</dbReference>
<dbReference type="PANTHER" id="PTHR10488">
    <property type="entry name" value="GLYCINE AMIDINOTRANSFERASE, MITOCHONDRIAL"/>
    <property type="match status" value="1"/>
</dbReference>
<dbReference type="PANTHER" id="PTHR10488:SF1">
    <property type="entry name" value="GLYCINE AMIDINOTRANSFERASE, MITOCHONDRIAL"/>
    <property type="match status" value="1"/>
</dbReference>
<dbReference type="SUPFAM" id="SSF55909">
    <property type="entry name" value="Pentein"/>
    <property type="match status" value="1"/>
</dbReference>
<sequence>MLRVRCLRGGSRGAEAVHYIGSRLGGSLTGWVQRTFQSTQAATASSQNSCAAEDKATHPLPKDCPVSSYNEWDPLEEVIVGRAENACVPPFTVEVKANTYEKYWPFYQKNGGLYFPKDHLKKAVAEVEEMCNILSMEGVTVKRPDPIDWSLKYKTPDFESTGLYSAMPRDILMVVGNEIIEAPMAWRSRFFEYRAYRSIIKDYFHRGAKWTTAPKPTMADELYDQDYPIHSVEDRHKLAAQGKFVTTEFEPCFDAADFIRAGRDIFAQRSQVTNYLGIEWMRRHLAPDYRVHIISFKDPNPMHIDATFNIIGPGLVLSNPDRPCHQIDLFKKAGWTIVTPPTPVIPDDHPLWMSSKWLSMNVLMLDEKRVMVDANEVPIQKMFEKLGISTIKVNIRNANSLGGGFHCWTCDVRRRGTLQSYFD</sequence>
<protein>
    <recommendedName>
        <fullName>Glycine amidinotransferase, mitochondrial</fullName>
        <ecNumber evidence="8">2.1.4.1</ecNumber>
    </recommendedName>
    <alternativeName>
        <fullName>L-arginine:glycine amidinotransferase</fullName>
    </alternativeName>
    <alternativeName>
        <fullName>Transamidinase</fullName>
    </alternativeName>
</protein>
<keyword id="KW-0007">Acetylation</keyword>
<keyword id="KW-0903">Direct protein sequencing</keyword>
<keyword id="KW-0472">Membrane</keyword>
<keyword id="KW-0496">Mitochondrion</keyword>
<keyword id="KW-0999">Mitochondrion inner membrane</keyword>
<keyword id="KW-0597">Phosphoprotein</keyword>
<keyword id="KW-1185">Reference proteome</keyword>
<keyword id="KW-0808">Transferase</keyword>
<keyword id="KW-0809">Transit peptide</keyword>
<name>GATM_RAT</name>
<accession>P50442</accession>
<accession>Q6ITZ7</accession>
<comment type="function">
    <text evidence="2 8 14">Transamidinase that catalyzes the transfer of the amidino group of L-arginine onto the amino moiety of acceptor metabolites such as glycine, beta-alanine, gamma-aminobutyric acid (GABA) and taurine yielding the corresponding guanidine derivatives (PubMed:6766137, PubMed:8035648). Catalyzes the rate-limiting step of creatine biosynthesis, namely the transfer of the amidino group from L-arginine to glycine to generate guanidinoacetate, which is then methylated by GAMT to form creatine (By similarity). Provides creatine as a source for ATP generation in tissues with high energy demands, in particular skeletal muscle, heart and brain (PubMed:6766137).</text>
</comment>
<comment type="catalytic activity">
    <reaction evidence="8">
        <text>L-arginine + glycine = guanidinoacetate + L-ornithine</text>
        <dbReference type="Rhea" id="RHEA:13201"/>
        <dbReference type="ChEBI" id="CHEBI:32682"/>
        <dbReference type="ChEBI" id="CHEBI:46911"/>
        <dbReference type="ChEBI" id="CHEBI:57305"/>
        <dbReference type="ChEBI" id="CHEBI:57742"/>
        <dbReference type="EC" id="2.1.4.1"/>
    </reaction>
    <physiologicalReaction direction="left-to-right" evidence="13">
        <dbReference type="Rhea" id="RHEA:13202"/>
    </physiologicalReaction>
</comment>
<comment type="catalytic activity">
    <reaction evidence="14">
        <text>4-aminobutanoate + L-arginine = 4-guanidinobutanoate + L-ornithine</text>
        <dbReference type="Rhea" id="RHEA:75939"/>
        <dbReference type="ChEBI" id="CHEBI:32682"/>
        <dbReference type="ChEBI" id="CHEBI:46911"/>
        <dbReference type="ChEBI" id="CHEBI:57486"/>
        <dbReference type="ChEBI" id="CHEBI:59888"/>
    </reaction>
    <physiologicalReaction direction="left-to-right" evidence="14">
        <dbReference type="Rhea" id="RHEA:75940"/>
    </physiologicalReaction>
</comment>
<comment type="catalytic activity">
    <reaction evidence="2">
        <text>beta-alanine + L-arginine = 3-guanidinopropanoate + L-ornithine</text>
        <dbReference type="Rhea" id="RHEA:75943"/>
        <dbReference type="ChEBI" id="CHEBI:32682"/>
        <dbReference type="ChEBI" id="CHEBI:46911"/>
        <dbReference type="ChEBI" id="CHEBI:57593"/>
        <dbReference type="ChEBI" id="CHEBI:57966"/>
    </reaction>
    <physiologicalReaction direction="left-to-right" evidence="2">
        <dbReference type="Rhea" id="RHEA:75944"/>
    </physiologicalReaction>
</comment>
<comment type="catalytic activity">
    <reaction evidence="2">
        <text>taurine + L-arginine = taurocyamine + L-ornithine</text>
        <dbReference type="Rhea" id="RHEA:75947"/>
        <dbReference type="ChEBI" id="CHEBI:32682"/>
        <dbReference type="ChEBI" id="CHEBI:46911"/>
        <dbReference type="ChEBI" id="CHEBI:58064"/>
        <dbReference type="ChEBI" id="CHEBI:507393"/>
    </reaction>
    <physiologicalReaction direction="left-to-right" evidence="13">
        <dbReference type="Rhea" id="RHEA:75948"/>
    </physiologicalReaction>
</comment>
<comment type="biophysicochemical properties">
    <kinetics>
        <KM evidence="8">2.8 mM for arginine (alpha-transamidinase form)</KM>
        <KM evidence="8">2.4 mM for arginine (beta-transamidinase form)</KM>
        <KM evidence="8">3 mM for glycine (alpha-transamidinase form)</KM>
        <KM evidence="8">3.1 mM for glycine (beta-transamidinase form)</KM>
        <KM evidence="10">27.2 mM for 4-aminobutanoate (alpha-transamidinase form)</KM>
        <KM evidence="10">24.9 mM for 4-aminobutanoate (beta-transamidinase form)</KM>
        <KM evidence="10">23 mM for lysine (alpha-transamidinase form)</KM>
        <KM evidence="10">23.5 mM for lysine (beta-transamidinase form)</KM>
        <KM evidence="10">23.9 mM for 5-amino-valerate (alpha-transamidinase form)</KM>
        <KM evidence="10">23.5 mM for 5-amino-valerate (beta-transamidinase form)</KM>
        <KM evidence="10">57.4 mM for 3-aminopropanoate (alpha-transamidinase form)</KM>
        <KM evidence="10">57.5 mM for 3-aminopropanoate (beta-transamidinase form)</KM>
        <KM evidence="10">174 mM for ethanolamine (alpha-transamidinase form)</KM>
        <KM evidence="10">171 mM for ethanolamine (beta-transamidinase form)</KM>
        <KM evidence="10">392 mM for taurine (alpha-transamidinase form)</KM>
        <KM evidence="10">450 mM for taurine (beta-transamidinase form)</KM>
        <Vmax evidence="8">0.39 umol/min/mg enzyme with L-arginine and glycine as substrates (alpha-transamidinase form)</Vmax>
        <Vmax evidence="8">0.37 umol/min/mg enzyme with L-arginine and glycine as substrates (beta-transamidinase form)</Vmax>
        <Vmax evidence="10">39.8 umol/h/mg enzyme with L-arginine and glycine as substrates (alpha-transamidinase form)</Vmax>
        <Vmax evidence="10">27.0 umol/h/mg enzyme with L-arginine and glycine as substrates (beta-transamidinase form)</Vmax>
        <Vmax evidence="10">16.8 umol/h/mg enzyme with L-arginine and 4-aminobutanoate as substrates (alpha-transamidinase form)</Vmax>
        <Vmax evidence="10">11.8 umol/h/mg enzyme with L-arginine and 4-aminobutanoate as substrates (beta-transamidinase form)</Vmax>
        <Vmax evidence="10">12.0 umol/h/ug enzyme with L-arginine and lysine as substrates (alpha-transamidinase form)</Vmax>
        <Vmax evidence="10">10.1 umol/h/ug enzyme with L-arginine and lysine as substrates (beta-transamidinase form)</Vmax>
        <Vmax evidence="10">13.9 umol/h/ug enzyme with L-arginine and 5-amino-valerate as substrates (alpha-transamidinase form)</Vmax>
        <Vmax evidence="10">9.7 umol/h/ug enzyme with L-arginine and 5-amino-valerate as substrates (beta-transamidinase form)</Vmax>
        <Vmax evidence="10">10.8 umol/h/ug enzyme with L-arginine and 3-aminopropanoate as substrates (alpha-transamidinase form)</Vmax>
        <Vmax evidence="10">7.7 umol/h/ug enzyme with L-arginine and 3-aminopropanoate as substrates (beta-transamidinase form)</Vmax>
        <Vmax evidence="10">12.4 umol/h/ug enzyme with L-arginine and ethanolamine as substrates (alpha-transamidinase form)</Vmax>
        <Vmax evidence="10">9.4 umol/h/ug enzyme with L-arginine and ethanolamine as substrates (beta-transamidinase form)</Vmax>
        <Vmax evidence="10">2.8 umol/h/ug enzyme with L-arginine and taurine as substrates (alpha-transamidinase form)</Vmax>
        <Vmax evidence="10">2.1 umol/h/ug enzyme with L-arginine and taurine as substrates (beta-transamidinase form)</Vmax>
        <text>Two forms of the enzyme (denoted alpha and beta) with slightly different kinetic properties are present in cellular extracts. The molecular basis of the differences is unclear.</text>
    </kinetics>
</comment>
<comment type="pathway">
    <text evidence="13">Amine and polyamine biosynthesis; creatine biosynthesis; creatine from L-arginine and glycine: step 1/2.</text>
</comment>
<comment type="subunit">
    <text evidence="2">Homodimer.</text>
</comment>
<comment type="subcellular location">
    <subcellularLocation>
        <location evidence="1">Mitochondrion inner membrane</location>
    </subcellularLocation>
</comment>
<comment type="tissue specificity">
    <text evidence="3 4 5 6 11">Highly expressed in the kidney and pancreas, especially in the proximal tubules of the kidney, and alpha cells of the pancreatic islets (at protein level). Moderately expressed in liver hepatocytes (at protein level). Expressed in the kidney, pancreas, liver, colon, ileum, jejunum, heart and skeletal muscle. In reproductive tissues, expressed in the testis, epididymis, ovary, oviduct and uterus. Expressed throughout the brain in neurons, astrocytes and oligodendrocytes. In 12.5 dpc embryos, it is expressed in the middle part of the somites, hepatic primordium and wall of the dorsal aorta. Expressed in 15.5 dpc embryos in isolated cells throughout the central nervous system, skeletal muscles, gonad primordia, caudal somites, liver and pancreas, but not in the choroid plexus, root ganglia or kidney. Expressed in skeletal muscle, kidney, pancreas, central nervous system, liver and intestine epithelial cells, but not in epidermis, dermis, olfactory epithelium, trachea, lung, stomach or heart in 18.5 dpc embryos.</text>
</comment>
<comment type="developmental stage">
    <text evidence="4 5">Expressed throughout embryogenesis. Expression in the colon and small intestine is highest in newborns and declines with age. Expression in the kidney increases with age.</text>
</comment>
<comment type="induction">
    <text evidence="7 8 9">Expression is induced by growth hormone and repressed by dietary intake of creatine.</text>
</comment>
<comment type="similarity">
    <text evidence="12">Belongs to the amidinotransferase family.</text>
</comment>
<proteinExistence type="evidence at protein level"/>
<reference key="1">
    <citation type="journal article" date="1994" name="J. Biol. Chem.">
        <title>Cloning and sequencing of rat kidney L-arginine:glycine amidinotransferase. Studies on the mechanism of regulation by growth hormone and creatine.</title>
        <authorList>
            <person name="Guthmiller P."/>
            <person name="van Pilsum J.F."/>
            <person name="Boen J.R."/>
            <person name="McGuire D.M."/>
        </authorList>
    </citation>
    <scope>NUCLEOTIDE SEQUENCE [MRNA]</scope>
    <scope>INDUCTION</scope>
    <source>
        <strain>Sprague-Dawley</strain>
        <tissue>Kidney</tissue>
    </source>
</reference>
<reference key="2">
    <citation type="journal article" date="2004" name="Genome Res.">
        <title>The status, quality, and expansion of the NIH full-length cDNA project: the Mammalian Gene Collection (MGC).</title>
        <authorList>
            <consortium name="The MGC Project Team"/>
        </authorList>
    </citation>
    <scope>NUCLEOTIDE SEQUENCE [LARGE SCALE MRNA]</scope>
    <source>
        <tissue>Testis</tissue>
    </source>
</reference>
<reference key="3">
    <citation type="journal article" date="1988" name="J. Nutr.">
        <title>Multiple forms of rat kidney L-arginine:glycine amidinotransferase.</title>
        <authorList>
            <person name="Gross M.D."/>
            <person name="Simon A.M."/>
            <person name="Jenny R.J."/>
            <person name="Gray E.D."/>
            <person name="McGuire D.M."/>
            <person name="van Pilsum J.F."/>
        </authorList>
    </citation>
    <scope>PROTEIN SEQUENCE OF 51-64</scope>
</reference>
<reference key="4">
    <citation type="submission" date="2004-05" db="EMBL/GenBank/DDBJ databases">
        <title>The comparative cDNA sequences of some mammalian kidney L-arginine:glycine amidinotransferase genes and their evolutionary significance.</title>
        <authorList>
            <person name="Zink R.M."/>
            <person name="Westberg M.C."/>
            <person name="Van Pilsum J.F."/>
        </authorList>
    </citation>
    <scope>NUCLEOTIDE SEQUENCE [MRNA] OF 120-358</scope>
</reference>
<reference key="5">
    <citation type="submission" date="2006-11" db="UniProtKB">
        <authorList>
            <person name="Lubec G."/>
            <person name="Afjehi-Sadat L."/>
        </authorList>
    </citation>
    <scope>PROTEIN SEQUENCE OF 244-260</scope>
    <scope>IDENTIFICATION BY MASS SPECTROMETRY</scope>
    <source>
        <strain>Sprague-Dawley</strain>
        <tissue>Spinal cord</tissue>
    </source>
</reference>
<reference key="6">
    <citation type="journal article" date="1980" name="J. Biol. Chem.">
        <title>The effect of growth hormone and thyroxine on the amount of L-arginine:glycine amidinotransferase in kidneys of hypophysectomized rats. Purification and some properties of rat kidney transamidinase.</title>
        <authorList>
            <person name="McGuire D.M."/>
            <person name="Tormanen C.D."/>
            <person name="Segal I.S."/>
            <person name="Van Pilsum J.F."/>
        </authorList>
    </citation>
    <scope>FUNCTION</scope>
    <scope>CATALYTIC ACTIVITY</scope>
    <scope>BIOPHYSICOCHEMICAL PROPERTIES</scope>
    <scope>INDUCTION</scope>
</reference>
<reference key="7">
    <citation type="journal article" date="1984" name="J. Biol. Chem.">
        <title>Repression of rat kidney L-arginine:glycine amidinotransferase synthesis by creatine at a pretranslational level.</title>
        <authorList>
            <person name="McGuire D.M."/>
            <person name="Gross M.D."/>
            <person name="Van Pilsum J.F."/>
            <person name="Towle H.C."/>
        </authorList>
    </citation>
    <scope>INDUCTION</scope>
</reference>
<reference key="8">
    <citation type="journal article" date="1986" name="J. Histochem. Cytochem.">
        <title>Localization of L-arginine-glycine amidinotransferase protein in rat tissues by immunofluorescence microscopy.</title>
        <authorList>
            <person name="McGuire D.M."/>
            <person name="Gross M.D."/>
            <person name="Elde R.P."/>
            <person name="van Pilsum J.F."/>
        </authorList>
    </citation>
    <scope>TISSUE SPECIFICITY</scope>
</reference>
<reference key="9">
    <citation type="journal article" date="1994" name="Life Sci.">
        <title>Synthesis of neuroactive guanidino compounds by rat kidney L-arginine: glycine amidinotransferase.</title>
        <authorList>
            <person name="Watanabe Y."/>
            <person name="Van Pilsum J.F."/>
            <person name="Yokoi I."/>
            <person name="Mori A."/>
        </authorList>
    </citation>
    <scope>FUNCTION</scope>
    <scope>CATALYTIC ACTIVITY</scope>
    <scope>BIOPHYSICOCHEMICAL PROPERTIES</scope>
</reference>
<reference key="10">
    <citation type="journal article" date="1998" name="Biol. Reprod.">
        <title>Creatine synthesis and transport systems in the male rat reproductive tract.</title>
        <authorList>
            <person name="Lee H."/>
            <person name="Kim J.H."/>
            <person name="Chae Y.J."/>
            <person name="Ogawa H."/>
            <person name="Lee M.H."/>
            <person name="Gerton G.L."/>
        </authorList>
    </citation>
    <scope>TISSUE SPECIFICITY</scope>
</reference>
<reference key="11">
    <citation type="journal article" date="2001" name="Brain Res. Mol. Brain Res.">
        <title>Endogenous synthesis and transport of creatine in the rat brain: an in situ hybridization study.</title>
        <authorList>
            <person name="Braissant O."/>
            <person name="Henry H."/>
            <person name="Loup M."/>
            <person name="Eilers B."/>
            <person name="Bachmann C."/>
        </authorList>
    </citation>
    <scope>TISSUE SPECIFICITY</scope>
</reference>
<reference key="12">
    <citation type="journal article" date="2005" name="BMC Dev. Biol.">
        <title>Creatine synthesis and transport during rat embryogenesis: spatiotemporal expression of AGAT, GAMT and CT1.</title>
        <authorList>
            <person name="Braissant O."/>
            <person name="Henry H."/>
            <person name="Villard A.M."/>
            <person name="Speer O."/>
            <person name="Wallimann T."/>
            <person name="Bachmann C."/>
        </authorList>
    </citation>
    <scope>TISSUE SPECIFICITY</scope>
    <scope>DEVELOPMENTAL STAGE</scope>
</reference>
<reference key="13">
    <citation type="journal article" date="2009" name="J. Physiol. Pharmacol.">
        <title>Ontogeny regulates creatine metabolism in rat small and large intestine.</title>
        <authorList>
            <person name="Garcia-Miranda P."/>
            <person name="Garcia-Delgado M."/>
            <person name="Peral M.J."/>
            <person name="Calonge M.L."/>
            <person name="Ilundain A.A."/>
        </authorList>
    </citation>
    <scope>TISSUE SPECIFICITY</scope>
    <scope>DEVELOPMENTAL STAGE</scope>
</reference>
<organism>
    <name type="scientific">Rattus norvegicus</name>
    <name type="common">Rat</name>
    <dbReference type="NCBI Taxonomy" id="10116"/>
    <lineage>
        <taxon>Eukaryota</taxon>
        <taxon>Metazoa</taxon>
        <taxon>Chordata</taxon>
        <taxon>Craniata</taxon>
        <taxon>Vertebrata</taxon>
        <taxon>Euteleostomi</taxon>
        <taxon>Mammalia</taxon>
        <taxon>Eutheria</taxon>
        <taxon>Euarchontoglires</taxon>
        <taxon>Glires</taxon>
        <taxon>Rodentia</taxon>
        <taxon>Myomorpha</taxon>
        <taxon>Muroidea</taxon>
        <taxon>Muridae</taxon>
        <taxon>Murinae</taxon>
        <taxon>Rattus</taxon>
    </lineage>
</organism>
<feature type="transit peptide" description="Mitochondrion">
    <location>
        <begin position="1"/>
        <end position="43"/>
    </location>
</feature>
<feature type="chain" id="PRO_0000001208" description="Glycine amidinotransferase, mitochondrial">
    <location>
        <begin position="44"/>
        <end position="423"/>
    </location>
</feature>
<feature type="active site" evidence="2">
    <location>
        <position position="254"/>
    </location>
</feature>
<feature type="active site" evidence="2">
    <location>
        <position position="303"/>
    </location>
</feature>
<feature type="active site" description="Amidino-cysteine intermediate" evidence="2">
    <location>
        <position position="407"/>
    </location>
</feature>
<feature type="binding site" evidence="2">
    <location>
        <position position="170"/>
    </location>
    <ligand>
        <name>arginine</name>
        <dbReference type="ChEBI" id="CHEBI:32696"/>
    </ligand>
</feature>
<feature type="binding site" evidence="2">
    <location>
        <position position="305"/>
    </location>
    <ligand>
        <name>arginine</name>
        <dbReference type="ChEBI" id="CHEBI:32696"/>
    </ligand>
</feature>
<feature type="binding site" evidence="2">
    <location>
        <position position="322"/>
    </location>
    <ligand>
        <name>arginine</name>
        <dbReference type="ChEBI" id="CHEBI:32696"/>
    </ligand>
</feature>
<feature type="binding site" evidence="2">
    <location>
        <position position="354"/>
    </location>
    <ligand>
        <name>arginine</name>
        <dbReference type="ChEBI" id="CHEBI:32696"/>
    </ligand>
</feature>
<feature type="binding site" evidence="2">
    <location>
        <position position="355"/>
    </location>
    <ligand>
        <name>arginine</name>
        <dbReference type="ChEBI" id="CHEBI:32696"/>
    </ligand>
</feature>
<feature type="modified residue" description="Phosphoserine" evidence="2">
    <location>
        <position position="46"/>
    </location>
</feature>
<feature type="modified residue" description="Phosphoserine" evidence="2">
    <location>
        <position position="49"/>
    </location>
</feature>
<feature type="modified residue" description="N6-acetyllysine" evidence="2">
    <location>
        <position position="385"/>
    </location>
</feature>
<evidence type="ECO:0000250" key="1"/>
<evidence type="ECO:0000250" key="2">
    <source>
        <dbReference type="UniProtKB" id="P50440"/>
    </source>
</evidence>
<evidence type="ECO:0000269" key="3">
    <source>
    </source>
</evidence>
<evidence type="ECO:0000269" key="4">
    <source>
    </source>
</evidence>
<evidence type="ECO:0000269" key="5">
    <source>
    </source>
</evidence>
<evidence type="ECO:0000269" key="6">
    <source>
    </source>
</evidence>
<evidence type="ECO:0000269" key="7">
    <source>
    </source>
</evidence>
<evidence type="ECO:0000269" key="8">
    <source>
    </source>
</evidence>
<evidence type="ECO:0000269" key="9">
    <source>
    </source>
</evidence>
<evidence type="ECO:0000269" key="10">
    <source>
    </source>
</evidence>
<evidence type="ECO:0000269" key="11">
    <source>
    </source>
</evidence>
<evidence type="ECO:0000305" key="12"/>
<evidence type="ECO:0000305" key="13">
    <source>
    </source>
</evidence>
<evidence type="ECO:0000305" key="14">
    <source>
    </source>
</evidence>